<proteinExistence type="evidence at transcript level"/>
<feature type="chain" id="PRO_0000236246" description="Rho-related GTP-binding protein Rho6">
    <location>
        <begin position="1"/>
        <end position="229"/>
    </location>
</feature>
<feature type="propeptide" id="PRO_0000281225" description="Removed in mature form" evidence="1">
    <location>
        <begin position="230"/>
        <end position="232"/>
    </location>
</feature>
<feature type="short sequence motif" description="Effector region" evidence="3">
    <location>
        <begin position="42"/>
        <end position="50"/>
    </location>
</feature>
<feature type="binding site" evidence="2">
    <location>
        <begin position="23"/>
        <end position="28"/>
    </location>
    <ligand>
        <name>GTP</name>
        <dbReference type="ChEBI" id="CHEBI:37565"/>
    </ligand>
</feature>
<feature type="binding site" evidence="2">
    <location>
        <begin position="38"/>
        <end position="45"/>
    </location>
    <ligand>
        <name>GTP</name>
        <dbReference type="ChEBI" id="CHEBI:37565"/>
    </ligand>
</feature>
<feature type="binding site" evidence="2">
    <location>
        <begin position="67"/>
        <end position="71"/>
    </location>
    <ligand>
        <name>GTP</name>
        <dbReference type="ChEBI" id="CHEBI:37565"/>
    </ligand>
</feature>
<feature type="binding site" evidence="2">
    <location>
        <begin position="125"/>
        <end position="128"/>
    </location>
    <ligand>
        <name>GTP</name>
        <dbReference type="ChEBI" id="CHEBI:37565"/>
    </ligand>
</feature>
<feature type="binding site" evidence="2">
    <location>
        <begin position="169"/>
        <end position="170"/>
    </location>
    <ligand>
        <name>GTP</name>
        <dbReference type="ChEBI" id="CHEBI:37565"/>
    </ligand>
</feature>
<feature type="modified residue" description="Cysteine methyl ester" evidence="1">
    <location>
        <position position="229"/>
    </location>
</feature>
<feature type="lipid moiety-binding region" description="S-geranylgeranyl cysteine" evidence="1">
    <location>
        <position position="229"/>
    </location>
</feature>
<gene>
    <name type="primary">RND1</name>
    <name type="synonym">RHO6</name>
</gene>
<reference key="1">
    <citation type="submission" date="2006-02" db="EMBL/GenBank/DDBJ databases">
        <authorList>
            <consortium name="NIH - Mammalian Gene Collection (MGC) project"/>
        </authorList>
    </citation>
    <scope>NUCLEOTIDE SEQUENCE [LARGE SCALE MRNA]</scope>
    <source>
        <strain>Hereford</strain>
        <tissue>Uterus</tissue>
    </source>
</reference>
<protein>
    <recommendedName>
        <fullName>Rho-related GTP-binding protein Rho6</fullName>
    </recommendedName>
    <alternativeName>
        <fullName>Rho family GTPase 1</fullName>
    </alternativeName>
    <alternativeName>
        <fullName>Rnd1</fullName>
    </alternativeName>
</protein>
<accession>Q2HJ68</accession>
<comment type="function">
    <text evidence="1">Lacks intrinsic GTPase activity. Has a low affinity for GDP, and constitutively binds GTP. Controls rearrangements of the actin cytoskeleton. Induces the Rac-dependent neuritic process formation in part by disruption of the cortical actin filaments. Causes the formation of many neuritic processes from the cell body with disruption of the cortical actin filaments (By similarity).</text>
</comment>
<comment type="subunit">
    <text evidence="1">Binds GRB7 and PLXNB1. Interacts with PLXNA2. Interacts with UBXD5 (By similarity).</text>
</comment>
<comment type="subcellular location">
    <subcellularLocation>
        <location evidence="1">Cell membrane</location>
        <topology evidence="1">Lipid-anchor</topology>
        <orientation evidence="1">Cytoplasmic side</orientation>
    </subcellularLocation>
    <subcellularLocation>
        <location evidence="1">Cytoplasm</location>
        <location evidence="1">Cytoskeleton</location>
    </subcellularLocation>
</comment>
<comment type="similarity">
    <text evidence="4">Belongs to the small GTPase superfamily. Rho family.</text>
</comment>
<dbReference type="EMBL" id="BC113283">
    <property type="protein sequence ID" value="AAI13284.1"/>
    <property type="molecule type" value="mRNA"/>
</dbReference>
<dbReference type="RefSeq" id="NP_001039481.1">
    <property type="nucleotide sequence ID" value="NM_001046016.1"/>
</dbReference>
<dbReference type="SMR" id="Q2HJ68"/>
<dbReference type="FunCoup" id="Q2HJ68">
    <property type="interactions" value="269"/>
</dbReference>
<dbReference type="STRING" id="9913.ENSBTAP00000024996"/>
<dbReference type="PaxDb" id="9913-ENSBTAP00000024996"/>
<dbReference type="Ensembl" id="ENSBTAT00000024996.7">
    <property type="protein sequence ID" value="ENSBTAP00000024996.5"/>
    <property type="gene ID" value="ENSBTAG00000018773.7"/>
</dbReference>
<dbReference type="GeneID" id="508869"/>
<dbReference type="KEGG" id="bta:508869"/>
<dbReference type="CTD" id="27289"/>
<dbReference type="VEuPathDB" id="HostDB:ENSBTAG00000018773"/>
<dbReference type="VGNC" id="VGNC:34004">
    <property type="gene designation" value="RND1"/>
</dbReference>
<dbReference type="eggNOG" id="KOG0393">
    <property type="taxonomic scope" value="Eukaryota"/>
</dbReference>
<dbReference type="GeneTree" id="ENSGT00940000158666"/>
<dbReference type="HOGENOM" id="CLU_041217_21_1_1"/>
<dbReference type="InParanoid" id="Q2HJ68"/>
<dbReference type="OMA" id="PIVARCK"/>
<dbReference type="OrthoDB" id="8830751at2759"/>
<dbReference type="TreeFam" id="TF330887"/>
<dbReference type="Reactome" id="R-BTA-416550">
    <property type="pathway name" value="Sema4D mediated inhibition of cell attachment and migration"/>
</dbReference>
<dbReference type="Reactome" id="R-BTA-416572">
    <property type="pathway name" value="Sema4D induced cell migration and growth-cone collapse"/>
</dbReference>
<dbReference type="Reactome" id="R-BTA-9696273">
    <property type="pathway name" value="RND1 GTPase cycle"/>
</dbReference>
<dbReference type="Proteomes" id="UP000009136">
    <property type="component" value="Chromosome 5"/>
</dbReference>
<dbReference type="Bgee" id="ENSBTAG00000018773">
    <property type="expression patterns" value="Expressed in intramuscular adipose tissue and 100 other cell types or tissues"/>
</dbReference>
<dbReference type="GO" id="GO:0015629">
    <property type="term" value="C:actin cytoskeleton"/>
    <property type="evidence" value="ECO:0007669"/>
    <property type="project" value="Ensembl"/>
</dbReference>
<dbReference type="GO" id="GO:0005912">
    <property type="term" value="C:adherens junction"/>
    <property type="evidence" value="ECO:0007669"/>
    <property type="project" value="Ensembl"/>
</dbReference>
<dbReference type="GO" id="GO:0005829">
    <property type="term" value="C:cytosol"/>
    <property type="evidence" value="ECO:0000318"/>
    <property type="project" value="GO_Central"/>
</dbReference>
<dbReference type="GO" id="GO:0043231">
    <property type="term" value="C:intracellular membrane-bounded organelle"/>
    <property type="evidence" value="ECO:0007669"/>
    <property type="project" value="Ensembl"/>
</dbReference>
<dbReference type="GO" id="GO:0005886">
    <property type="term" value="C:plasma membrane"/>
    <property type="evidence" value="ECO:0000318"/>
    <property type="project" value="GO_Central"/>
</dbReference>
<dbReference type="GO" id="GO:0005525">
    <property type="term" value="F:GTP binding"/>
    <property type="evidence" value="ECO:0000318"/>
    <property type="project" value="GO_Central"/>
</dbReference>
<dbReference type="GO" id="GO:0003924">
    <property type="term" value="F:GTPase activity"/>
    <property type="evidence" value="ECO:0000318"/>
    <property type="project" value="GO_Central"/>
</dbReference>
<dbReference type="GO" id="GO:0019901">
    <property type="term" value="F:protein kinase binding"/>
    <property type="evidence" value="ECO:0000318"/>
    <property type="project" value="GO_Central"/>
</dbReference>
<dbReference type="GO" id="GO:0005102">
    <property type="term" value="F:signaling receptor binding"/>
    <property type="evidence" value="ECO:0007669"/>
    <property type="project" value="Ensembl"/>
</dbReference>
<dbReference type="GO" id="GO:0007015">
    <property type="term" value="P:actin filament organization"/>
    <property type="evidence" value="ECO:0000318"/>
    <property type="project" value="GO_Central"/>
</dbReference>
<dbReference type="GO" id="GO:0007162">
    <property type="term" value="P:negative regulation of cell adhesion"/>
    <property type="evidence" value="ECO:0007669"/>
    <property type="project" value="Ensembl"/>
</dbReference>
<dbReference type="GO" id="GO:0016322">
    <property type="term" value="P:neuron remodeling"/>
    <property type="evidence" value="ECO:0007669"/>
    <property type="project" value="Ensembl"/>
</dbReference>
<dbReference type="GO" id="GO:0032956">
    <property type="term" value="P:regulation of actin cytoskeleton organization"/>
    <property type="evidence" value="ECO:0000318"/>
    <property type="project" value="GO_Central"/>
</dbReference>
<dbReference type="GO" id="GO:0007165">
    <property type="term" value="P:signal transduction"/>
    <property type="evidence" value="ECO:0000318"/>
    <property type="project" value="GO_Central"/>
</dbReference>
<dbReference type="GO" id="GO:0007264">
    <property type="term" value="P:small GTPase-mediated signal transduction"/>
    <property type="evidence" value="ECO:0007669"/>
    <property type="project" value="InterPro"/>
</dbReference>
<dbReference type="FunFam" id="3.40.50.300:FF:000569">
    <property type="entry name" value="Rho-related GTP-binding protein Rho6"/>
    <property type="match status" value="1"/>
</dbReference>
<dbReference type="Gene3D" id="3.40.50.300">
    <property type="entry name" value="P-loop containing nucleotide triphosphate hydrolases"/>
    <property type="match status" value="1"/>
</dbReference>
<dbReference type="InterPro" id="IPR027417">
    <property type="entry name" value="P-loop_NTPase"/>
</dbReference>
<dbReference type="InterPro" id="IPR005225">
    <property type="entry name" value="Small_GTP-bd"/>
</dbReference>
<dbReference type="InterPro" id="IPR001806">
    <property type="entry name" value="Small_GTPase"/>
</dbReference>
<dbReference type="InterPro" id="IPR003578">
    <property type="entry name" value="Small_GTPase_Rho"/>
</dbReference>
<dbReference type="NCBIfam" id="TIGR00231">
    <property type="entry name" value="small_GTP"/>
    <property type="match status" value="1"/>
</dbReference>
<dbReference type="PANTHER" id="PTHR24072">
    <property type="entry name" value="RHO FAMILY GTPASE"/>
    <property type="match status" value="1"/>
</dbReference>
<dbReference type="Pfam" id="PF00071">
    <property type="entry name" value="Ras"/>
    <property type="match status" value="1"/>
</dbReference>
<dbReference type="PRINTS" id="PR00449">
    <property type="entry name" value="RASTRNSFRMNG"/>
</dbReference>
<dbReference type="SMART" id="SM00175">
    <property type="entry name" value="RAB"/>
    <property type="match status" value="1"/>
</dbReference>
<dbReference type="SMART" id="SM00173">
    <property type="entry name" value="RAS"/>
    <property type="match status" value="1"/>
</dbReference>
<dbReference type="SMART" id="SM00174">
    <property type="entry name" value="RHO"/>
    <property type="match status" value="1"/>
</dbReference>
<dbReference type="SUPFAM" id="SSF52540">
    <property type="entry name" value="P-loop containing nucleoside triphosphate hydrolases"/>
    <property type="match status" value="1"/>
</dbReference>
<dbReference type="PROSITE" id="PS51420">
    <property type="entry name" value="RHO"/>
    <property type="match status" value="1"/>
</dbReference>
<sequence>MKERRAPQPVVARCKLVLVGDVQCGKTAMLQVLAKDCYPETYVPTVFENYTACLETEEQRVELSLWDTSGSPYYDNVRPLCYSDSDAVLLCFDISRPETVDSALKKWRTEILDYCPSTRVLLIGCKTDLRTDLSTLMELSHQKQAPISYEQGCAIAKQLGAEIYLEGSAFTSEKSIHSIFRTASMVCLNKPSPMPPKSPVRSLSKRLLHLPSRSELISSTFKKEKAKSCSIM</sequence>
<organism>
    <name type="scientific">Bos taurus</name>
    <name type="common">Bovine</name>
    <dbReference type="NCBI Taxonomy" id="9913"/>
    <lineage>
        <taxon>Eukaryota</taxon>
        <taxon>Metazoa</taxon>
        <taxon>Chordata</taxon>
        <taxon>Craniata</taxon>
        <taxon>Vertebrata</taxon>
        <taxon>Euteleostomi</taxon>
        <taxon>Mammalia</taxon>
        <taxon>Eutheria</taxon>
        <taxon>Laurasiatheria</taxon>
        <taxon>Artiodactyla</taxon>
        <taxon>Ruminantia</taxon>
        <taxon>Pecora</taxon>
        <taxon>Bovidae</taxon>
        <taxon>Bovinae</taxon>
        <taxon>Bos</taxon>
    </lineage>
</organism>
<name>RND1_BOVIN</name>
<evidence type="ECO:0000250" key="1"/>
<evidence type="ECO:0000250" key="2">
    <source>
        <dbReference type="UniProtKB" id="Q92730"/>
    </source>
</evidence>
<evidence type="ECO:0000255" key="3"/>
<evidence type="ECO:0000305" key="4"/>
<keyword id="KW-1003">Cell membrane</keyword>
<keyword id="KW-0963">Cytoplasm</keyword>
<keyword id="KW-0206">Cytoskeleton</keyword>
<keyword id="KW-0342">GTP-binding</keyword>
<keyword id="KW-0449">Lipoprotein</keyword>
<keyword id="KW-0472">Membrane</keyword>
<keyword id="KW-0488">Methylation</keyword>
<keyword id="KW-0547">Nucleotide-binding</keyword>
<keyword id="KW-0636">Prenylation</keyword>
<keyword id="KW-1185">Reference proteome</keyword>